<sequence>MIESITSFGAATFGGWWPLIWTLVRAVCIILPLLLCVAYLILWERKLIGWMHVRVGPNRVGPMGLLQPIADVLKLLLKEVMVPSAVSRGMYIIAPLMVLMPAVAIWAVVPFQAEAVVSNINAGLLYVMAISSVGVYGVILAGWASNSKYAFLGAMRASAQMISYEIAMGFALVTVLMVTGSLNLSDIVNSQNRGFFANHGINILSWNWLSLLPMFGVYFISGVAETNRHPFDVVEGESEIVAGHMIEYSGMAFALFFLAEYINMIVISAMTATMFLGGWSAPIDAPVFNWIPGFFWLLIKVFLLLSVFIWLRASFPRYRYDQIMRLGWKIFIPLTVGWLIIVAIWLVSPWNIWK</sequence>
<protein>
    <recommendedName>
        <fullName evidence="1">NADH-quinone oxidoreductase subunit H</fullName>
        <ecNumber evidence="1">7.1.1.-</ecNumber>
    </recommendedName>
    <alternativeName>
        <fullName evidence="1">NADH dehydrogenase I subunit H</fullName>
    </alternativeName>
    <alternativeName>
        <fullName evidence="1">NDH-1 subunit H</fullName>
    </alternativeName>
</protein>
<accession>Q8XXQ8</accession>
<keyword id="KW-0997">Cell inner membrane</keyword>
<keyword id="KW-1003">Cell membrane</keyword>
<keyword id="KW-0472">Membrane</keyword>
<keyword id="KW-0520">NAD</keyword>
<keyword id="KW-0874">Quinone</keyword>
<keyword id="KW-1185">Reference proteome</keyword>
<keyword id="KW-1278">Translocase</keyword>
<keyword id="KW-0812">Transmembrane</keyword>
<keyword id="KW-1133">Transmembrane helix</keyword>
<keyword id="KW-0830">Ubiquinone</keyword>
<evidence type="ECO:0000255" key="1">
    <source>
        <dbReference type="HAMAP-Rule" id="MF_01350"/>
    </source>
</evidence>
<dbReference type="EC" id="7.1.1.-" evidence="1"/>
<dbReference type="EMBL" id="AL646052">
    <property type="protein sequence ID" value="CAD15762.1"/>
    <property type="molecule type" value="Genomic_DNA"/>
</dbReference>
<dbReference type="RefSeq" id="WP_011001988.1">
    <property type="nucleotide sequence ID" value="NC_003295.1"/>
</dbReference>
<dbReference type="SMR" id="Q8XXQ8"/>
<dbReference type="STRING" id="267608.RSc2055"/>
<dbReference type="EnsemblBacteria" id="CAD15762">
    <property type="protein sequence ID" value="CAD15762"/>
    <property type="gene ID" value="RSc2055"/>
</dbReference>
<dbReference type="GeneID" id="93853095"/>
<dbReference type="KEGG" id="rso:RSc2055"/>
<dbReference type="eggNOG" id="COG1005">
    <property type="taxonomic scope" value="Bacteria"/>
</dbReference>
<dbReference type="HOGENOM" id="CLU_015134_0_1_4"/>
<dbReference type="Proteomes" id="UP000001436">
    <property type="component" value="Chromosome"/>
</dbReference>
<dbReference type="GO" id="GO:0005886">
    <property type="term" value="C:plasma membrane"/>
    <property type="evidence" value="ECO:0007669"/>
    <property type="project" value="UniProtKB-SubCell"/>
</dbReference>
<dbReference type="GO" id="GO:0003954">
    <property type="term" value="F:NADH dehydrogenase activity"/>
    <property type="evidence" value="ECO:0007669"/>
    <property type="project" value="TreeGrafter"/>
</dbReference>
<dbReference type="GO" id="GO:0016655">
    <property type="term" value="F:oxidoreductase activity, acting on NAD(P)H, quinone or similar compound as acceptor"/>
    <property type="evidence" value="ECO:0007669"/>
    <property type="project" value="UniProtKB-UniRule"/>
</dbReference>
<dbReference type="GO" id="GO:0048038">
    <property type="term" value="F:quinone binding"/>
    <property type="evidence" value="ECO:0007669"/>
    <property type="project" value="UniProtKB-KW"/>
</dbReference>
<dbReference type="GO" id="GO:0009060">
    <property type="term" value="P:aerobic respiration"/>
    <property type="evidence" value="ECO:0007669"/>
    <property type="project" value="TreeGrafter"/>
</dbReference>
<dbReference type="HAMAP" id="MF_01350">
    <property type="entry name" value="NDH1_NuoH"/>
    <property type="match status" value="1"/>
</dbReference>
<dbReference type="InterPro" id="IPR001694">
    <property type="entry name" value="NADH_UbQ_OxRdtase_su1/FPO"/>
</dbReference>
<dbReference type="InterPro" id="IPR018086">
    <property type="entry name" value="NADH_UbQ_OxRdtase_su1_CS"/>
</dbReference>
<dbReference type="NCBIfam" id="NF004741">
    <property type="entry name" value="PRK06076.1-2"/>
    <property type="match status" value="1"/>
</dbReference>
<dbReference type="NCBIfam" id="NF004742">
    <property type="entry name" value="PRK06076.1-3"/>
    <property type="match status" value="1"/>
</dbReference>
<dbReference type="PANTHER" id="PTHR11432">
    <property type="entry name" value="NADH DEHYDROGENASE SUBUNIT 1"/>
    <property type="match status" value="1"/>
</dbReference>
<dbReference type="PANTHER" id="PTHR11432:SF3">
    <property type="entry name" value="NADH-UBIQUINONE OXIDOREDUCTASE CHAIN 1"/>
    <property type="match status" value="1"/>
</dbReference>
<dbReference type="Pfam" id="PF00146">
    <property type="entry name" value="NADHdh"/>
    <property type="match status" value="1"/>
</dbReference>
<dbReference type="PROSITE" id="PS00668">
    <property type="entry name" value="COMPLEX1_ND1_2"/>
    <property type="match status" value="1"/>
</dbReference>
<comment type="function">
    <text evidence="1">NDH-1 shuttles electrons from NADH, via FMN and iron-sulfur (Fe-S) centers, to quinones in the respiratory chain. The immediate electron acceptor for the enzyme in this species is believed to be ubiquinone. Couples the redox reaction to proton translocation (for every two electrons transferred, four hydrogen ions are translocated across the cytoplasmic membrane), and thus conserves the redox energy in a proton gradient. This subunit may bind ubiquinone.</text>
</comment>
<comment type="catalytic activity">
    <reaction evidence="1">
        <text>a quinone + NADH + 5 H(+)(in) = a quinol + NAD(+) + 4 H(+)(out)</text>
        <dbReference type="Rhea" id="RHEA:57888"/>
        <dbReference type="ChEBI" id="CHEBI:15378"/>
        <dbReference type="ChEBI" id="CHEBI:24646"/>
        <dbReference type="ChEBI" id="CHEBI:57540"/>
        <dbReference type="ChEBI" id="CHEBI:57945"/>
        <dbReference type="ChEBI" id="CHEBI:132124"/>
    </reaction>
</comment>
<comment type="subunit">
    <text evidence="1">NDH-1 is composed of 14 different subunits. Subunits NuoA, H, J, K, L, M, N constitute the membrane sector of the complex.</text>
</comment>
<comment type="subcellular location">
    <subcellularLocation>
        <location evidence="1">Cell inner membrane</location>
        <topology evidence="1">Multi-pass membrane protein</topology>
    </subcellularLocation>
</comment>
<comment type="similarity">
    <text evidence="1">Belongs to the complex I subunit 1 family.</text>
</comment>
<reference key="1">
    <citation type="journal article" date="2002" name="Nature">
        <title>Genome sequence of the plant pathogen Ralstonia solanacearum.</title>
        <authorList>
            <person name="Salanoubat M."/>
            <person name="Genin S."/>
            <person name="Artiguenave F."/>
            <person name="Gouzy J."/>
            <person name="Mangenot S."/>
            <person name="Arlat M."/>
            <person name="Billault A."/>
            <person name="Brottier P."/>
            <person name="Camus J.-C."/>
            <person name="Cattolico L."/>
            <person name="Chandler M."/>
            <person name="Choisne N."/>
            <person name="Claudel-Renard C."/>
            <person name="Cunnac S."/>
            <person name="Demange N."/>
            <person name="Gaspin C."/>
            <person name="Lavie M."/>
            <person name="Moisan A."/>
            <person name="Robert C."/>
            <person name="Saurin W."/>
            <person name="Schiex T."/>
            <person name="Siguier P."/>
            <person name="Thebault P."/>
            <person name="Whalen M."/>
            <person name="Wincker P."/>
            <person name="Levy M."/>
            <person name="Weissenbach J."/>
            <person name="Boucher C.A."/>
        </authorList>
    </citation>
    <scope>NUCLEOTIDE SEQUENCE [LARGE SCALE GENOMIC DNA]</scope>
    <source>
        <strain>ATCC BAA-1114 / GMI1000</strain>
    </source>
</reference>
<gene>
    <name evidence="1" type="primary">nuoH</name>
    <name type="ordered locus">RSc2055</name>
</gene>
<name>NUOH_RALN1</name>
<proteinExistence type="inferred from homology"/>
<feature type="chain" id="PRO_0000244934" description="NADH-quinone oxidoreductase subunit H">
    <location>
        <begin position="1"/>
        <end position="354"/>
    </location>
</feature>
<feature type="transmembrane region" description="Helical" evidence="1">
    <location>
        <begin position="23"/>
        <end position="43"/>
    </location>
</feature>
<feature type="transmembrane region" description="Helical" evidence="1">
    <location>
        <begin position="91"/>
        <end position="111"/>
    </location>
</feature>
<feature type="transmembrane region" description="Helical" evidence="1">
    <location>
        <begin position="124"/>
        <end position="144"/>
    </location>
</feature>
<feature type="transmembrane region" description="Helical" evidence="1">
    <location>
        <begin position="162"/>
        <end position="182"/>
    </location>
</feature>
<feature type="transmembrane region" description="Helical" evidence="1">
    <location>
        <begin position="203"/>
        <end position="223"/>
    </location>
</feature>
<feature type="transmembrane region" description="Helical" evidence="1">
    <location>
        <begin position="250"/>
        <end position="270"/>
    </location>
</feature>
<feature type="transmembrane region" description="Helical" evidence="1">
    <location>
        <begin position="291"/>
        <end position="311"/>
    </location>
</feature>
<feature type="transmembrane region" description="Helical" evidence="1">
    <location>
        <begin position="330"/>
        <end position="350"/>
    </location>
</feature>
<organism>
    <name type="scientific">Ralstonia nicotianae (strain ATCC BAA-1114 / GMI1000)</name>
    <name type="common">Ralstonia solanacearum</name>
    <dbReference type="NCBI Taxonomy" id="267608"/>
    <lineage>
        <taxon>Bacteria</taxon>
        <taxon>Pseudomonadati</taxon>
        <taxon>Pseudomonadota</taxon>
        <taxon>Betaproteobacteria</taxon>
        <taxon>Burkholderiales</taxon>
        <taxon>Burkholderiaceae</taxon>
        <taxon>Ralstonia</taxon>
        <taxon>Ralstonia solanacearum species complex</taxon>
    </lineage>
</organism>